<proteinExistence type="inferred from homology"/>
<evidence type="ECO:0000255" key="1">
    <source>
        <dbReference type="HAMAP-Rule" id="MF_01589"/>
    </source>
</evidence>
<accession>B5FCP8</accession>
<comment type="function">
    <text evidence="1">Catalyzes the conversion of S-adenosyl-L-methionine (SAM) to carboxy-S-adenosyl-L-methionine (Cx-SAM).</text>
</comment>
<comment type="catalytic activity">
    <reaction evidence="1">
        <text>prephenate + S-adenosyl-L-methionine = carboxy-S-adenosyl-L-methionine + 3-phenylpyruvate + H2O</text>
        <dbReference type="Rhea" id="RHEA:51692"/>
        <dbReference type="ChEBI" id="CHEBI:15377"/>
        <dbReference type="ChEBI" id="CHEBI:18005"/>
        <dbReference type="ChEBI" id="CHEBI:29934"/>
        <dbReference type="ChEBI" id="CHEBI:59789"/>
        <dbReference type="ChEBI" id="CHEBI:134278"/>
    </reaction>
</comment>
<comment type="subunit">
    <text evidence="1">Homodimer.</text>
</comment>
<comment type="similarity">
    <text evidence="1">Belongs to the class I-like SAM-binding methyltransferase superfamily. Cx-SAM synthase family.</text>
</comment>
<sequence>MANPDTIFSTPIDKIGDFTFDERVAEVFPDMIQRSIPGYSNIISAIGMLAERYAKPHSNVYDLGCSLGAATLSMRRSINQEGCQIIGVDNSSAMVERCRLLVNAYRSDTPVTILEADIRDVDIQDASVVVLNFTLQFLAPADRHALLEKIYAGLRPGGILILSEKYIFEDENANELLIDLHHDFKRANGYSELEISQKRSAIENVMLPDTIDVHKKRFNDIGFKSSEVWFQCFNFGSMFAIK</sequence>
<organism>
    <name type="scientific">Aliivibrio fischeri (strain MJ11)</name>
    <name type="common">Vibrio fischeri</name>
    <dbReference type="NCBI Taxonomy" id="388396"/>
    <lineage>
        <taxon>Bacteria</taxon>
        <taxon>Pseudomonadati</taxon>
        <taxon>Pseudomonadota</taxon>
        <taxon>Gammaproteobacteria</taxon>
        <taxon>Vibrionales</taxon>
        <taxon>Vibrionaceae</taxon>
        <taxon>Aliivibrio</taxon>
    </lineage>
</organism>
<dbReference type="EC" id="2.1.3.-" evidence="1"/>
<dbReference type="EMBL" id="CP001139">
    <property type="protein sequence ID" value="ACH65505.1"/>
    <property type="molecule type" value="Genomic_DNA"/>
</dbReference>
<dbReference type="RefSeq" id="WP_012533101.1">
    <property type="nucleotide sequence ID" value="NC_011184.1"/>
</dbReference>
<dbReference type="SMR" id="B5FCP8"/>
<dbReference type="KEGG" id="vfm:VFMJ11_0989"/>
<dbReference type="HOGENOM" id="CLU_078475_0_0_6"/>
<dbReference type="Proteomes" id="UP000001857">
    <property type="component" value="Chromosome I"/>
</dbReference>
<dbReference type="GO" id="GO:0016743">
    <property type="term" value="F:carboxyl- or carbamoyltransferase activity"/>
    <property type="evidence" value="ECO:0007669"/>
    <property type="project" value="UniProtKB-UniRule"/>
</dbReference>
<dbReference type="GO" id="GO:1904047">
    <property type="term" value="F:S-adenosyl-L-methionine binding"/>
    <property type="evidence" value="ECO:0007669"/>
    <property type="project" value="UniProtKB-UniRule"/>
</dbReference>
<dbReference type="GO" id="GO:0002098">
    <property type="term" value="P:tRNA wobble uridine modification"/>
    <property type="evidence" value="ECO:0007669"/>
    <property type="project" value="InterPro"/>
</dbReference>
<dbReference type="CDD" id="cd02440">
    <property type="entry name" value="AdoMet_MTases"/>
    <property type="match status" value="1"/>
</dbReference>
<dbReference type="Gene3D" id="3.40.50.150">
    <property type="entry name" value="Vaccinia Virus protein VP39"/>
    <property type="match status" value="1"/>
</dbReference>
<dbReference type="HAMAP" id="MF_01589">
    <property type="entry name" value="Cx_SAM_synthase"/>
    <property type="match status" value="1"/>
</dbReference>
<dbReference type="InterPro" id="IPR005271">
    <property type="entry name" value="CmoA"/>
</dbReference>
<dbReference type="InterPro" id="IPR041698">
    <property type="entry name" value="Methyltransf_25"/>
</dbReference>
<dbReference type="InterPro" id="IPR029063">
    <property type="entry name" value="SAM-dependent_MTases_sf"/>
</dbReference>
<dbReference type="NCBIfam" id="TIGR00740">
    <property type="entry name" value="carboxy-S-adenosyl-L-methionine synthase CmoA"/>
    <property type="match status" value="1"/>
</dbReference>
<dbReference type="NCBIfam" id="NF011995">
    <property type="entry name" value="PRK15451.1"/>
    <property type="match status" value="1"/>
</dbReference>
<dbReference type="PANTHER" id="PTHR43861:SF2">
    <property type="entry name" value="CARBOXY-S-ADENOSYL-L-METHIONINE SYNTHASE"/>
    <property type="match status" value="1"/>
</dbReference>
<dbReference type="PANTHER" id="PTHR43861">
    <property type="entry name" value="TRANS-ACONITATE 2-METHYLTRANSFERASE-RELATED"/>
    <property type="match status" value="1"/>
</dbReference>
<dbReference type="Pfam" id="PF13649">
    <property type="entry name" value="Methyltransf_25"/>
    <property type="match status" value="1"/>
</dbReference>
<dbReference type="PIRSF" id="PIRSF006325">
    <property type="entry name" value="MeTrfase_bac"/>
    <property type="match status" value="1"/>
</dbReference>
<dbReference type="SUPFAM" id="SSF53335">
    <property type="entry name" value="S-adenosyl-L-methionine-dependent methyltransferases"/>
    <property type="match status" value="1"/>
</dbReference>
<reference key="1">
    <citation type="submission" date="2008-08" db="EMBL/GenBank/DDBJ databases">
        <title>Complete sequence of Vibrio fischeri strain MJ11.</title>
        <authorList>
            <person name="Mandel M.J."/>
            <person name="Stabb E.V."/>
            <person name="Ruby E.G."/>
            <person name="Ferriera S."/>
            <person name="Johnson J."/>
            <person name="Kravitz S."/>
            <person name="Beeson K."/>
            <person name="Sutton G."/>
            <person name="Rogers Y.-H."/>
            <person name="Friedman R."/>
            <person name="Frazier M."/>
            <person name="Venter J.C."/>
        </authorList>
    </citation>
    <scope>NUCLEOTIDE SEQUENCE [LARGE SCALE GENOMIC DNA]</scope>
    <source>
        <strain>MJ11</strain>
    </source>
</reference>
<name>CMOA_ALIFM</name>
<gene>
    <name evidence="1" type="primary">cmoA</name>
    <name type="ordered locus">VFMJ11_0989</name>
</gene>
<keyword id="KW-0949">S-adenosyl-L-methionine</keyword>
<keyword id="KW-0808">Transferase</keyword>
<feature type="chain" id="PRO_1000201372" description="Carboxy-S-adenosyl-L-methionine synthase">
    <location>
        <begin position="1"/>
        <end position="242"/>
    </location>
</feature>
<feature type="binding site" evidence="1">
    <location>
        <position position="39"/>
    </location>
    <ligand>
        <name>S-adenosyl-L-methionine</name>
        <dbReference type="ChEBI" id="CHEBI:59789"/>
    </ligand>
</feature>
<feature type="binding site" evidence="1">
    <location>
        <begin position="64"/>
        <end position="66"/>
    </location>
    <ligand>
        <name>S-adenosyl-L-methionine</name>
        <dbReference type="ChEBI" id="CHEBI:59789"/>
    </ligand>
</feature>
<feature type="binding site" evidence="1">
    <location>
        <begin position="89"/>
        <end position="90"/>
    </location>
    <ligand>
        <name>S-adenosyl-L-methionine</name>
        <dbReference type="ChEBI" id="CHEBI:59789"/>
    </ligand>
</feature>
<feature type="binding site" evidence="1">
    <location>
        <begin position="117"/>
        <end position="118"/>
    </location>
    <ligand>
        <name>S-adenosyl-L-methionine</name>
        <dbReference type="ChEBI" id="CHEBI:59789"/>
    </ligand>
</feature>
<feature type="binding site" evidence="1">
    <location>
        <position position="132"/>
    </location>
    <ligand>
        <name>S-adenosyl-L-methionine</name>
        <dbReference type="ChEBI" id="CHEBI:59789"/>
    </ligand>
</feature>
<feature type="binding site" evidence="1">
    <location>
        <position position="199"/>
    </location>
    <ligand>
        <name>S-adenosyl-L-methionine</name>
        <dbReference type="ChEBI" id="CHEBI:59789"/>
    </ligand>
</feature>
<protein>
    <recommendedName>
        <fullName evidence="1">Carboxy-S-adenosyl-L-methionine synthase</fullName>
        <shortName evidence="1">Cx-SAM synthase</shortName>
        <ecNumber evidence="1">2.1.3.-</ecNumber>
    </recommendedName>
</protein>